<evidence type="ECO:0000255" key="1">
    <source>
        <dbReference type="HAMAP-Rule" id="MF_00040"/>
    </source>
</evidence>
<name>RRF_BACCR</name>
<accession>Q812X4</accession>
<gene>
    <name evidence="1" type="primary">frr</name>
    <name type="ordered locus">BC_3822</name>
</gene>
<comment type="function">
    <text evidence="1">Responsible for the release of ribosomes from messenger RNA at the termination of protein biosynthesis. May increase the efficiency of translation by recycling ribosomes from one round of translation to another.</text>
</comment>
<comment type="subcellular location">
    <subcellularLocation>
        <location evidence="1">Cytoplasm</location>
    </subcellularLocation>
</comment>
<comment type="similarity">
    <text evidence="1">Belongs to the RRF family.</text>
</comment>
<keyword id="KW-0963">Cytoplasm</keyword>
<keyword id="KW-0648">Protein biosynthesis</keyword>
<keyword id="KW-1185">Reference proteome</keyword>
<sequence length="185" mass="20647">MGQQVLKSSNEKMEKAVAAYSRELATVRAGRANASVLDKVQVDYYGAPTPVVQLANITVPEARLLVIQPYDKTSIGDIEKAILKADLGLNPSNDGTVIRIAFPALTEERRRDLVKVVKKYAEEAKVAVRNVRRDGNDDLKKLEKAGEITEDDLRGYTEDIQKETDKYIAKVDEIAKNKEKEIMEV</sequence>
<proteinExistence type="inferred from homology"/>
<reference key="1">
    <citation type="journal article" date="2003" name="Nature">
        <title>Genome sequence of Bacillus cereus and comparative analysis with Bacillus anthracis.</title>
        <authorList>
            <person name="Ivanova N."/>
            <person name="Sorokin A."/>
            <person name="Anderson I."/>
            <person name="Galleron N."/>
            <person name="Candelon B."/>
            <person name="Kapatral V."/>
            <person name="Bhattacharyya A."/>
            <person name="Reznik G."/>
            <person name="Mikhailova N."/>
            <person name="Lapidus A."/>
            <person name="Chu L."/>
            <person name="Mazur M."/>
            <person name="Goltsman E."/>
            <person name="Larsen N."/>
            <person name="D'Souza M."/>
            <person name="Walunas T."/>
            <person name="Grechkin Y."/>
            <person name="Pusch G."/>
            <person name="Haselkorn R."/>
            <person name="Fonstein M."/>
            <person name="Ehrlich S.D."/>
            <person name="Overbeek R."/>
            <person name="Kyrpides N.C."/>
        </authorList>
    </citation>
    <scope>NUCLEOTIDE SEQUENCE [LARGE SCALE GENOMIC DNA]</scope>
    <source>
        <strain>ATCC 14579 / DSM 31 / CCUG 7414 / JCM 2152 / NBRC 15305 / NCIMB 9373 / NCTC 2599 / NRRL B-3711</strain>
    </source>
</reference>
<organism>
    <name type="scientific">Bacillus cereus (strain ATCC 14579 / DSM 31 / CCUG 7414 / JCM 2152 / NBRC 15305 / NCIMB 9373 / NCTC 2599 / NRRL B-3711)</name>
    <dbReference type="NCBI Taxonomy" id="226900"/>
    <lineage>
        <taxon>Bacteria</taxon>
        <taxon>Bacillati</taxon>
        <taxon>Bacillota</taxon>
        <taxon>Bacilli</taxon>
        <taxon>Bacillales</taxon>
        <taxon>Bacillaceae</taxon>
        <taxon>Bacillus</taxon>
        <taxon>Bacillus cereus group</taxon>
    </lineage>
</organism>
<protein>
    <recommendedName>
        <fullName evidence="1">Ribosome-recycling factor</fullName>
        <shortName evidence="1">RRF</shortName>
    </recommendedName>
    <alternativeName>
        <fullName evidence="1">Ribosome-releasing factor</fullName>
    </alternativeName>
</protein>
<feature type="chain" id="PRO_0000167404" description="Ribosome-recycling factor">
    <location>
        <begin position="1"/>
        <end position="185"/>
    </location>
</feature>
<dbReference type="EMBL" id="AE016877">
    <property type="protein sequence ID" value="AAP10744.1"/>
    <property type="molecule type" value="Genomic_DNA"/>
</dbReference>
<dbReference type="RefSeq" id="NP_833543.1">
    <property type="nucleotide sequence ID" value="NC_004722.1"/>
</dbReference>
<dbReference type="RefSeq" id="WP_000531501.1">
    <property type="nucleotide sequence ID" value="NZ_CP138336.1"/>
</dbReference>
<dbReference type="SMR" id="Q812X4"/>
<dbReference type="STRING" id="226900.BC_3822"/>
<dbReference type="GeneID" id="93007288"/>
<dbReference type="KEGG" id="bce:BC3822"/>
<dbReference type="PATRIC" id="fig|226900.8.peg.3941"/>
<dbReference type="HOGENOM" id="CLU_073981_2_0_9"/>
<dbReference type="OrthoDB" id="9804006at2"/>
<dbReference type="Proteomes" id="UP000001417">
    <property type="component" value="Chromosome"/>
</dbReference>
<dbReference type="GO" id="GO:0005737">
    <property type="term" value="C:cytoplasm"/>
    <property type="evidence" value="ECO:0007669"/>
    <property type="project" value="UniProtKB-SubCell"/>
</dbReference>
<dbReference type="GO" id="GO:0043023">
    <property type="term" value="F:ribosomal large subunit binding"/>
    <property type="evidence" value="ECO:0000318"/>
    <property type="project" value="GO_Central"/>
</dbReference>
<dbReference type="GO" id="GO:0006412">
    <property type="term" value="P:translation"/>
    <property type="evidence" value="ECO:0000318"/>
    <property type="project" value="GO_Central"/>
</dbReference>
<dbReference type="GO" id="GO:0006415">
    <property type="term" value="P:translational termination"/>
    <property type="evidence" value="ECO:0007669"/>
    <property type="project" value="UniProtKB-UniRule"/>
</dbReference>
<dbReference type="CDD" id="cd00520">
    <property type="entry name" value="RRF"/>
    <property type="match status" value="1"/>
</dbReference>
<dbReference type="FunFam" id="1.10.132.20:FF:000001">
    <property type="entry name" value="Ribosome-recycling factor"/>
    <property type="match status" value="1"/>
</dbReference>
<dbReference type="FunFam" id="3.30.1360.40:FF:000001">
    <property type="entry name" value="Ribosome-recycling factor"/>
    <property type="match status" value="1"/>
</dbReference>
<dbReference type="Gene3D" id="3.30.1360.40">
    <property type="match status" value="1"/>
</dbReference>
<dbReference type="Gene3D" id="1.10.132.20">
    <property type="entry name" value="Ribosome-recycling factor"/>
    <property type="match status" value="1"/>
</dbReference>
<dbReference type="HAMAP" id="MF_00040">
    <property type="entry name" value="RRF"/>
    <property type="match status" value="1"/>
</dbReference>
<dbReference type="InterPro" id="IPR002661">
    <property type="entry name" value="Ribosome_recyc_fac"/>
</dbReference>
<dbReference type="InterPro" id="IPR023584">
    <property type="entry name" value="Ribosome_recyc_fac_dom"/>
</dbReference>
<dbReference type="InterPro" id="IPR036191">
    <property type="entry name" value="RRF_sf"/>
</dbReference>
<dbReference type="NCBIfam" id="TIGR00496">
    <property type="entry name" value="frr"/>
    <property type="match status" value="1"/>
</dbReference>
<dbReference type="PANTHER" id="PTHR20982:SF3">
    <property type="entry name" value="MITOCHONDRIAL RIBOSOME RECYCLING FACTOR PSEUDO 1"/>
    <property type="match status" value="1"/>
</dbReference>
<dbReference type="PANTHER" id="PTHR20982">
    <property type="entry name" value="RIBOSOME RECYCLING FACTOR"/>
    <property type="match status" value="1"/>
</dbReference>
<dbReference type="Pfam" id="PF01765">
    <property type="entry name" value="RRF"/>
    <property type="match status" value="1"/>
</dbReference>
<dbReference type="SUPFAM" id="SSF55194">
    <property type="entry name" value="Ribosome recycling factor, RRF"/>
    <property type="match status" value="1"/>
</dbReference>